<comment type="function">
    <text evidence="1">Binds together with bS18 to 16S ribosomal RNA.</text>
</comment>
<comment type="similarity">
    <text evidence="1">Belongs to the bacterial ribosomal protein bS6 family.</text>
</comment>
<sequence>MPYYEHVFLARQDASAQQVEELTTQITGVIEGLGGKVTKTESWGVRSLTYRIQKNRKAHFVLLNIDGPATIVAEVERQERINEDIIRYLTVRVDELEEGPSAMMRKADRDRERDERGGPREGGFRSERGPRRPREEETTASVEE</sequence>
<organism>
    <name type="scientific">Afipia carboxidovorans (strain ATCC 49405 / DSM 1227 / KCTC 32145 / OM5)</name>
    <name type="common">Oligotropha carboxidovorans</name>
    <dbReference type="NCBI Taxonomy" id="504832"/>
    <lineage>
        <taxon>Bacteria</taxon>
        <taxon>Pseudomonadati</taxon>
        <taxon>Pseudomonadota</taxon>
        <taxon>Alphaproteobacteria</taxon>
        <taxon>Hyphomicrobiales</taxon>
        <taxon>Nitrobacteraceae</taxon>
        <taxon>Afipia</taxon>
    </lineage>
</organism>
<feature type="chain" id="PRO_1000120781" description="Small ribosomal subunit protein bS6">
    <location>
        <begin position="1"/>
        <end position="144"/>
    </location>
</feature>
<feature type="region of interest" description="Disordered" evidence="2">
    <location>
        <begin position="97"/>
        <end position="144"/>
    </location>
</feature>
<feature type="compositionally biased region" description="Basic and acidic residues" evidence="2">
    <location>
        <begin position="105"/>
        <end position="137"/>
    </location>
</feature>
<keyword id="KW-1185">Reference proteome</keyword>
<keyword id="KW-0687">Ribonucleoprotein</keyword>
<keyword id="KW-0689">Ribosomal protein</keyword>
<keyword id="KW-0694">RNA-binding</keyword>
<keyword id="KW-0699">rRNA-binding</keyword>
<name>RS6_AFIC5</name>
<reference key="1">
    <citation type="journal article" date="2008" name="J. Bacteriol.">
        <title>Genome sequence of the chemolithoautotrophic bacterium Oligotropha carboxidovorans OM5T.</title>
        <authorList>
            <person name="Paul D."/>
            <person name="Bridges S."/>
            <person name="Burgess S.C."/>
            <person name="Dandass Y."/>
            <person name="Lawrence M.L."/>
        </authorList>
    </citation>
    <scope>NUCLEOTIDE SEQUENCE [LARGE SCALE GENOMIC DNA]</scope>
    <source>
        <strain>ATCC 49405 / DSM 1227 / KCTC 32145 / OM5</strain>
    </source>
</reference>
<reference key="2">
    <citation type="journal article" date="2011" name="J. Bacteriol.">
        <title>Complete genome sequences of the chemolithoautotrophic Oligotropha carboxidovorans strains OM4 and OM5.</title>
        <authorList>
            <person name="Volland S."/>
            <person name="Rachinger M."/>
            <person name="Strittmatter A."/>
            <person name="Daniel R."/>
            <person name="Gottschalk G."/>
            <person name="Meyer O."/>
        </authorList>
    </citation>
    <scope>NUCLEOTIDE SEQUENCE [LARGE SCALE GENOMIC DNA]</scope>
    <source>
        <strain>ATCC 49405 / DSM 1227 / KCTC 32145 / OM5</strain>
    </source>
</reference>
<evidence type="ECO:0000255" key="1">
    <source>
        <dbReference type="HAMAP-Rule" id="MF_00360"/>
    </source>
</evidence>
<evidence type="ECO:0000256" key="2">
    <source>
        <dbReference type="SAM" id="MobiDB-lite"/>
    </source>
</evidence>
<evidence type="ECO:0000305" key="3"/>
<gene>
    <name evidence="1" type="primary">rpsF</name>
    <name type="ordered locus">OCAR_6371</name>
    <name type="ordered locus">OCA5_c16730</name>
</gene>
<proteinExistence type="inferred from homology"/>
<protein>
    <recommendedName>
        <fullName evidence="1">Small ribosomal subunit protein bS6</fullName>
    </recommendedName>
    <alternativeName>
        <fullName evidence="3">30S ribosomal protein S6</fullName>
    </alternativeName>
</protein>
<dbReference type="EMBL" id="CP001196">
    <property type="protein sequence ID" value="ACI93484.1"/>
    <property type="molecule type" value="Genomic_DNA"/>
</dbReference>
<dbReference type="EMBL" id="CP002826">
    <property type="protein sequence ID" value="AEI06387.1"/>
    <property type="molecule type" value="Genomic_DNA"/>
</dbReference>
<dbReference type="RefSeq" id="WP_012563510.1">
    <property type="nucleotide sequence ID" value="NC_015684.1"/>
</dbReference>
<dbReference type="SMR" id="B6JGN7"/>
<dbReference type="STRING" id="504832.OCA5_c16730"/>
<dbReference type="KEGG" id="oca:OCAR_6371"/>
<dbReference type="KEGG" id="ocg:OCA5_c16730"/>
<dbReference type="PATRIC" id="fig|504832.7.peg.1785"/>
<dbReference type="eggNOG" id="COG0360">
    <property type="taxonomic scope" value="Bacteria"/>
</dbReference>
<dbReference type="HOGENOM" id="CLU_113441_2_0_5"/>
<dbReference type="OrthoDB" id="9812702at2"/>
<dbReference type="Proteomes" id="UP000007730">
    <property type="component" value="Chromosome"/>
</dbReference>
<dbReference type="GO" id="GO:0022627">
    <property type="term" value="C:cytosolic small ribosomal subunit"/>
    <property type="evidence" value="ECO:0007669"/>
    <property type="project" value="TreeGrafter"/>
</dbReference>
<dbReference type="GO" id="GO:0070181">
    <property type="term" value="F:small ribosomal subunit rRNA binding"/>
    <property type="evidence" value="ECO:0007669"/>
    <property type="project" value="TreeGrafter"/>
</dbReference>
<dbReference type="GO" id="GO:0003735">
    <property type="term" value="F:structural constituent of ribosome"/>
    <property type="evidence" value="ECO:0007669"/>
    <property type="project" value="InterPro"/>
</dbReference>
<dbReference type="GO" id="GO:0006412">
    <property type="term" value="P:translation"/>
    <property type="evidence" value="ECO:0007669"/>
    <property type="project" value="UniProtKB-UniRule"/>
</dbReference>
<dbReference type="CDD" id="cd00473">
    <property type="entry name" value="bS6"/>
    <property type="match status" value="1"/>
</dbReference>
<dbReference type="Gene3D" id="3.30.70.60">
    <property type="match status" value="1"/>
</dbReference>
<dbReference type="HAMAP" id="MF_00360">
    <property type="entry name" value="Ribosomal_bS6"/>
    <property type="match status" value="1"/>
</dbReference>
<dbReference type="InterPro" id="IPR000529">
    <property type="entry name" value="Ribosomal_bS6"/>
</dbReference>
<dbReference type="InterPro" id="IPR035980">
    <property type="entry name" value="Ribosomal_bS6_sf"/>
</dbReference>
<dbReference type="InterPro" id="IPR020814">
    <property type="entry name" value="Ribosomal_S6_plastid/chlpt"/>
</dbReference>
<dbReference type="InterPro" id="IPR014717">
    <property type="entry name" value="Transl_elong_EF1B/ribsomal_bS6"/>
</dbReference>
<dbReference type="NCBIfam" id="TIGR00166">
    <property type="entry name" value="S6"/>
    <property type="match status" value="1"/>
</dbReference>
<dbReference type="PANTHER" id="PTHR21011">
    <property type="entry name" value="MITOCHONDRIAL 28S RIBOSOMAL PROTEIN S6"/>
    <property type="match status" value="1"/>
</dbReference>
<dbReference type="PANTHER" id="PTHR21011:SF1">
    <property type="entry name" value="SMALL RIBOSOMAL SUBUNIT PROTEIN BS6M"/>
    <property type="match status" value="1"/>
</dbReference>
<dbReference type="Pfam" id="PF01250">
    <property type="entry name" value="Ribosomal_S6"/>
    <property type="match status" value="1"/>
</dbReference>
<dbReference type="SUPFAM" id="SSF54995">
    <property type="entry name" value="Ribosomal protein S6"/>
    <property type="match status" value="1"/>
</dbReference>
<accession>B6JGN7</accession>
<accession>F8C0L1</accession>